<feature type="chain" id="PRO_1000025290" description="Co-chaperonin GroES">
    <location>
        <begin position="1"/>
        <end position="96"/>
    </location>
</feature>
<comment type="function">
    <text evidence="1">Together with the chaperonin GroEL, plays an essential role in assisting protein folding. The GroEL-GroES system forms a nano-cage that allows encapsulation of the non-native substrate proteins and provides a physical environment optimized to promote and accelerate protein folding. GroES binds to the apical surface of the GroEL ring, thereby capping the opening of the GroEL channel.</text>
</comment>
<comment type="subunit">
    <text evidence="1">Heptamer of 7 subunits arranged in a ring. Interacts with the chaperonin GroEL.</text>
</comment>
<comment type="subcellular location">
    <subcellularLocation>
        <location evidence="1">Cytoplasm</location>
    </subcellularLocation>
</comment>
<comment type="similarity">
    <text evidence="1">Belongs to the GroES chaperonin family.</text>
</comment>
<gene>
    <name evidence="1" type="primary">groES</name>
    <name evidence="1" type="synonym">groS</name>
    <name type="ordered locus">LPC_2607</name>
</gene>
<name>CH10_LEGPC</name>
<organism>
    <name type="scientific">Legionella pneumophila (strain Corby)</name>
    <dbReference type="NCBI Taxonomy" id="400673"/>
    <lineage>
        <taxon>Bacteria</taxon>
        <taxon>Pseudomonadati</taxon>
        <taxon>Pseudomonadota</taxon>
        <taxon>Gammaproteobacteria</taxon>
        <taxon>Legionellales</taxon>
        <taxon>Legionellaceae</taxon>
        <taxon>Legionella</taxon>
    </lineage>
</organism>
<accession>A5IGM2</accession>
<protein>
    <recommendedName>
        <fullName evidence="1">Co-chaperonin GroES</fullName>
    </recommendedName>
    <alternativeName>
        <fullName evidence="1">10 kDa chaperonin</fullName>
    </alternativeName>
    <alternativeName>
        <fullName evidence="1">Chaperonin-10</fullName>
        <shortName evidence="1">Cpn10</shortName>
    </alternativeName>
</protein>
<keyword id="KW-0143">Chaperone</keyword>
<keyword id="KW-0963">Cytoplasm</keyword>
<reference key="1">
    <citation type="submission" date="2006-11" db="EMBL/GenBank/DDBJ databases">
        <title>Identification and characterization of a new conjugation/ type IVA secretion system (trb/tra) of L. pneumophila Corby localized on a mobile genomic island.</title>
        <authorList>
            <person name="Gloeckner G."/>
            <person name="Albert-Weissenberger C."/>
            <person name="Weinmann E."/>
            <person name="Jacobi S."/>
            <person name="Schunder E."/>
            <person name="Steinert M."/>
            <person name="Buchrieser C."/>
            <person name="Hacker J."/>
            <person name="Heuner K."/>
        </authorList>
    </citation>
    <scope>NUCLEOTIDE SEQUENCE [LARGE SCALE GENOMIC DNA]</scope>
    <source>
        <strain>Corby</strain>
    </source>
</reference>
<evidence type="ECO:0000255" key="1">
    <source>
        <dbReference type="HAMAP-Rule" id="MF_00580"/>
    </source>
</evidence>
<dbReference type="EMBL" id="CP000675">
    <property type="protein sequence ID" value="ABQ56522.1"/>
    <property type="molecule type" value="Genomic_DNA"/>
</dbReference>
<dbReference type="RefSeq" id="WP_010946424.1">
    <property type="nucleotide sequence ID" value="NZ_JAPMSS010000016.1"/>
</dbReference>
<dbReference type="SMR" id="A5IGM2"/>
<dbReference type="GeneID" id="57034680"/>
<dbReference type="KEGG" id="lpc:LPC_2607"/>
<dbReference type="HOGENOM" id="CLU_132825_2_0_6"/>
<dbReference type="GO" id="GO:0005737">
    <property type="term" value="C:cytoplasm"/>
    <property type="evidence" value="ECO:0007669"/>
    <property type="project" value="UniProtKB-SubCell"/>
</dbReference>
<dbReference type="GO" id="GO:0005524">
    <property type="term" value="F:ATP binding"/>
    <property type="evidence" value="ECO:0007669"/>
    <property type="project" value="InterPro"/>
</dbReference>
<dbReference type="GO" id="GO:0046872">
    <property type="term" value="F:metal ion binding"/>
    <property type="evidence" value="ECO:0007669"/>
    <property type="project" value="TreeGrafter"/>
</dbReference>
<dbReference type="GO" id="GO:0044183">
    <property type="term" value="F:protein folding chaperone"/>
    <property type="evidence" value="ECO:0007669"/>
    <property type="project" value="InterPro"/>
</dbReference>
<dbReference type="GO" id="GO:0051087">
    <property type="term" value="F:protein-folding chaperone binding"/>
    <property type="evidence" value="ECO:0007669"/>
    <property type="project" value="TreeGrafter"/>
</dbReference>
<dbReference type="GO" id="GO:0051082">
    <property type="term" value="F:unfolded protein binding"/>
    <property type="evidence" value="ECO:0007669"/>
    <property type="project" value="TreeGrafter"/>
</dbReference>
<dbReference type="GO" id="GO:0051085">
    <property type="term" value="P:chaperone cofactor-dependent protein refolding"/>
    <property type="evidence" value="ECO:0007669"/>
    <property type="project" value="TreeGrafter"/>
</dbReference>
<dbReference type="CDD" id="cd00320">
    <property type="entry name" value="cpn10"/>
    <property type="match status" value="1"/>
</dbReference>
<dbReference type="FunFam" id="2.30.33.40:FF:000001">
    <property type="entry name" value="10 kDa chaperonin"/>
    <property type="match status" value="1"/>
</dbReference>
<dbReference type="Gene3D" id="2.30.33.40">
    <property type="entry name" value="GroES chaperonin"/>
    <property type="match status" value="1"/>
</dbReference>
<dbReference type="HAMAP" id="MF_00580">
    <property type="entry name" value="CH10"/>
    <property type="match status" value="1"/>
</dbReference>
<dbReference type="InterPro" id="IPR020818">
    <property type="entry name" value="Chaperonin_GroES"/>
</dbReference>
<dbReference type="InterPro" id="IPR037124">
    <property type="entry name" value="Chaperonin_GroES_sf"/>
</dbReference>
<dbReference type="InterPro" id="IPR018369">
    <property type="entry name" value="Chaprnonin_Cpn10_CS"/>
</dbReference>
<dbReference type="InterPro" id="IPR011032">
    <property type="entry name" value="GroES-like_sf"/>
</dbReference>
<dbReference type="NCBIfam" id="NF001527">
    <property type="entry name" value="PRK00364.1-2"/>
    <property type="match status" value="1"/>
</dbReference>
<dbReference type="NCBIfam" id="NF001529">
    <property type="entry name" value="PRK00364.1-5"/>
    <property type="match status" value="1"/>
</dbReference>
<dbReference type="NCBIfam" id="NF001531">
    <property type="entry name" value="PRK00364.2-2"/>
    <property type="match status" value="1"/>
</dbReference>
<dbReference type="NCBIfam" id="NF001533">
    <property type="entry name" value="PRK00364.2-4"/>
    <property type="match status" value="1"/>
</dbReference>
<dbReference type="NCBIfam" id="NF001534">
    <property type="entry name" value="PRK00364.2-5"/>
    <property type="match status" value="1"/>
</dbReference>
<dbReference type="PANTHER" id="PTHR10772">
    <property type="entry name" value="10 KDA HEAT SHOCK PROTEIN"/>
    <property type="match status" value="1"/>
</dbReference>
<dbReference type="PANTHER" id="PTHR10772:SF58">
    <property type="entry name" value="CO-CHAPERONIN GROES"/>
    <property type="match status" value="1"/>
</dbReference>
<dbReference type="Pfam" id="PF00166">
    <property type="entry name" value="Cpn10"/>
    <property type="match status" value="1"/>
</dbReference>
<dbReference type="PRINTS" id="PR00297">
    <property type="entry name" value="CHAPERONIN10"/>
</dbReference>
<dbReference type="SMART" id="SM00883">
    <property type="entry name" value="Cpn10"/>
    <property type="match status" value="1"/>
</dbReference>
<dbReference type="SUPFAM" id="SSF50129">
    <property type="entry name" value="GroES-like"/>
    <property type="match status" value="1"/>
</dbReference>
<dbReference type="PROSITE" id="PS00681">
    <property type="entry name" value="CHAPERONINS_CPN10"/>
    <property type="match status" value="1"/>
</dbReference>
<proteinExistence type="inferred from homology"/>
<sequence>MKIRPLHDRVVVRRMEEERTTAGGIVIPDSATEKPMRGEIIAVGAGKVLENGDVRALAVKVGDVVLFGKYSGTEVKVDGKELVVMREDDIMGVIEK</sequence>